<comment type="function">
    <text evidence="1">The UvrABC repair system catalyzes the recognition and processing of DNA lesions. UvrC both incises the 5' and 3' sides of the lesion. The N-terminal half is responsible for the 3' incision and the C-terminal half is responsible for the 5' incision.</text>
</comment>
<comment type="subunit">
    <text evidence="1">Interacts with UvrB in an incision complex.</text>
</comment>
<comment type="subcellular location">
    <subcellularLocation>
        <location evidence="1">Cytoplasm</location>
    </subcellularLocation>
</comment>
<comment type="similarity">
    <text evidence="1">Belongs to the UvrC family.</text>
</comment>
<name>UVRC_STRCO</name>
<evidence type="ECO:0000255" key="1">
    <source>
        <dbReference type="HAMAP-Rule" id="MF_00203"/>
    </source>
</evidence>
<evidence type="ECO:0000256" key="2">
    <source>
        <dbReference type="SAM" id="MobiDB-lite"/>
    </source>
</evidence>
<proteinExistence type="inferred from homology"/>
<dbReference type="EMBL" id="AL939110">
    <property type="protein sequence ID" value="CAB38143.1"/>
    <property type="molecule type" value="Genomic_DNA"/>
</dbReference>
<dbReference type="PIR" id="T36026">
    <property type="entry name" value="T36026"/>
</dbReference>
<dbReference type="RefSeq" id="NP_626217.1">
    <property type="nucleotide sequence ID" value="NC_003888.3"/>
</dbReference>
<dbReference type="RefSeq" id="WP_011028063.1">
    <property type="nucleotide sequence ID" value="NZ_VNID01000001.1"/>
</dbReference>
<dbReference type="SMR" id="Q9Z512"/>
<dbReference type="FunCoup" id="Q9Z512">
    <property type="interactions" value="34"/>
</dbReference>
<dbReference type="STRING" id="100226.gene:17759550"/>
<dbReference type="PaxDb" id="100226-SCO1953"/>
<dbReference type="KEGG" id="sco:SCO1953"/>
<dbReference type="PATRIC" id="fig|100226.15.peg.1979"/>
<dbReference type="eggNOG" id="COG0322">
    <property type="taxonomic scope" value="Bacteria"/>
</dbReference>
<dbReference type="HOGENOM" id="CLU_014841_1_1_11"/>
<dbReference type="InParanoid" id="Q9Z512"/>
<dbReference type="OrthoDB" id="9804933at2"/>
<dbReference type="PhylomeDB" id="Q9Z512"/>
<dbReference type="Proteomes" id="UP000001973">
    <property type="component" value="Chromosome"/>
</dbReference>
<dbReference type="GO" id="GO:0005737">
    <property type="term" value="C:cytoplasm"/>
    <property type="evidence" value="ECO:0007669"/>
    <property type="project" value="UniProtKB-SubCell"/>
</dbReference>
<dbReference type="GO" id="GO:0009380">
    <property type="term" value="C:excinuclease repair complex"/>
    <property type="evidence" value="ECO:0000318"/>
    <property type="project" value="GO_Central"/>
</dbReference>
<dbReference type="GO" id="GO:0003677">
    <property type="term" value="F:DNA binding"/>
    <property type="evidence" value="ECO:0007669"/>
    <property type="project" value="UniProtKB-UniRule"/>
</dbReference>
<dbReference type="GO" id="GO:0009381">
    <property type="term" value="F:excinuclease ABC activity"/>
    <property type="evidence" value="ECO:0007669"/>
    <property type="project" value="UniProtKB-UniRule"/>
</dbReference>
<dbReference type="GO" id="GO:0006974">
    <property type="term" value="P:DNA damage response"/>
    <property type="evidence" value="ECO:0000318"/>
    <property type="project" value="GO_Central"/>
</dbReference>
<dbReference type="GO" id="GO:0006289">
    <property type="term" value="P:nucleotide-excision repair"/>
    <property type="evidence" value="ECO:0007669"/>
    <property type="project" value="UniProtKB-UniRule"/>
</dbReference>
<dbReference type="GO" id="GO:0009432">
    <property type="term" value="P:SOS response"/>
    <property type="evidence" value="ECO:0007669"/>
    <property type="project" value="UniProtKB-UniRule"/>
</dbReference>
<dbReference type="CDD" id="cd10434">
    <property type="entry name" value="GIY-YIG_UvrC_Cho"/>
    <property type="match status" value="1"/>
</dbReference>
<dbReference type="FunFam" id="3.40.1440.10:FF:000001">
    <property type="entry name" value="UvrABC system protein C"/>
    <property type="match status" value="1"/>
</dbReference>
<dbReference type="Gene3D" id="1.10.150.20">
    <property type="entry name" value="5' to 3' exonuclease, C-terminal subdomain"/>
    <property type="match status" value="1"/>
</dbReference>
<dbReference type="Gene3D" id="3.40.1440.10">
    <property type="entry name" value="GIY-YIG endonuclease"/>
    <property type="match status" value="1"/>
</dbReference>
<dbReference type="Gene3D" id="4.10.860.10">
    <property type="entry name" value="UVR domain"/>
    <property type="match status" value="1"/>
</dbReference>
<dbReference type="Gene3D" id="3.30.420.340">
    <property type="entry name" value="UvrC, RNAse H endonuclease domain"/>
    <property type="match status" value="1"/>
</dbReference>
<dbReference type="HAMAP" id="MF_00203">
    <property type="entry name" value="UvrC"/>
    <property type="match status" value="1"/>
</dbReference>
<dbReference type="InterPro" id="IPR000305">
    <property type="entry name" value="GIY-YIG_endonuc"/>
</dbReference>
<dbReference type="InterPro" id="IPR035901">
    <property type="entry name" value="GIY-YIG_endonuc_sf"/>
</dbReference>
<dbReference type="InterPro" id="IPR047296">
    <property type="entry name" value="GIY-YIG_UvrC_Cho"/>
</dbReference>
<dbReference type="InterPro" id="IPR003583">
    <property type="entry name" value="Hlx-hairpin-Hlx_DNA-bd_motif"/>
</dbReference>
<dbReference type="InterPro" id="IPR010994">
    <property type="entry name" value="RuvA_2-like"/>
</dbReference>
<dbReference type="InterPro" id="IPR001943">
    <property type="entry name" value="UVR_dom"/>
</dbReference>
<dbReference type="InterPro" id="IPR036876">
    <property type="entry name" value="UVR_dom_sf"/>
</dbReference>
<dbReference type="InterPro" id="IPR050066">
    <property type="entry name" value="UvrABC_protein_C"/>
</dbReference>
<dbReference type="InterPro" id="IPR004791">
    <property type="entry name" value="UvrC"/>
</dbReference>
<dbReference type="InterPro" id="IPR001162">
    <property type="entry name" value="UvrC_RNase_H_dom"/>
</dbReference>
<dbReference type="InterPro" id="IPR038476">
    <property type="entry name" value="UvrC_RNase_H_dom_sf"/>
</dbReference>
<dbReference type="NCBIfam" id="NF001824">
    <property type="entry name" value="PRK00558.1-5"/>
    <property type="match status" value="1"/>
</dbReference>
<dbReference type="NCBIfam" id="TIGR00194">
    <property type="entry name" value="uvrC"/>
    <property type="match status" value="1"/>
</dbReference>
<dbReference type="PANTHER" id="PTHR30562:SF1">
    <property type="entry name" value="UVRABC SYSTEM PROTEIN C"/>
    <property type="match status" value="1"/>
</dbReference>
<dbReference type="PANTHER" id="PTHR30562">
    <property type="entry name" value="UVRC/OXIDOREDUCTASE"/>
    <property type="match status" value="1"/>
</dbReference>
<dbReference type="Pfam" id="PF01541">
    <property type="entry name" value="GIY-YIG"/>
    <property type="match status" value="1"/>
</dbReference>
<dbReference type="Pfam" id="PF14520">
    <property type="entry name" value="HHH_5"/>
    <property type="match status" value="1"/>
</dbReference>
<dbReference type="Pfam" id="PF02151">
    <property type="entry name" value="UVR"/>
    <property type="match status" value="1"/>
</dbReference>
<dbReference type="Pfam" id="PF22920">
    <property type="entry name" value="UvrC_RNaseH"/>
    <property type="match status" value="1"/>
</dbReference>
<dbReference type="Pfam" id="PF08459">
    <property type="entry name" value="UvrC_RNaseH_dom"/>
    <property type="match status" value="1"/>
</dbReference>
<dbReference type="SMART" id="SM00465">
    <property type="entry name" value="GIYc"/>
    <property type="match status" value="1"/>
</dbReference>
<dbReference type="SMART" id="SM00278">
    <property type="entry name" value="HhH1"/>
    <property type="match status" value="2"/>
</dbReference>
<dbReference type="SUPFAM" id="SSF46600">
    <property type="entry name" value="C-terminal UvrC-binding domain of UvrB"/>
    <property type="match status" value="1"/>
</dbReference>
<dbReference type="SUPFAM" id="SSF82771">
    <property type="entry name" value="GIY-YIG endonuclease"/>
    <property type="match status" value="1"/>
</dbReference>
<dbReference type="SUPFAM" id="SSF47781">
    <property type="entry name" value="RuvA domain 2-like"/>
    <property type="match status" value="1"/>
</dbReference>
<dbReference type="PROSITE" id="PS50164">
    <property type="entry name" value="GIY_YIG"/>
    <property type="match status" value="1"/>
</dbReference>
<dbReference type="PROSITE" id="PS50151">
    <property type="entry name" value="UVR"/>
    <property type="match status" value="1"/>
</dbReference>
<dbReference type="PROSITE" id="PS50165">
    <property type="entry name" value="UVRC"/>
    <property type="match status" value="1"/>
</dbReference>
<keyword id="KW-0963">Cytoplasm</keyword>
<keyword id="KW-0227">DNA damage</keyword>
<keyword id="KW-0228">DNA excision</keyword>
<keyword id="KW-0234">DNA repair</keyword>
<keyword id="KW-0267">Excision nuclease</keyword>
<keyword id="KW-1185">Reference proteome</keyword>
<keyword id="KW-0742">SOS response</keyword>
<gene>
    <name evidence="1" type="primary">uvrC</name>
    <name type="ordered locus">SCO1953</name>
    <name type="ORF">SCC54.13c</name>
</gene>
<reference key="1">
    <citation type="journal article" date="2002" name="Nature">
        <title>Complete genome sequence of the model actinomycete Streptomyces coelicolor A3(2).</title>
        <authorList>
            <person name="Bentley S.D."/>
            <person name="Chater K.F."/>
            <person name="Cerdeno-Tarraga A.-M."/>
            <person name="Challis G.L."/>
            <person name="Thomson N.R."/>
            <person name="James K.D."/>
            <person name="Harris D.E."/>
            <person name="Quail M.A."/>
            <person name="Kieser H."/>
            <person name="Harper D."/>
            <person name="Bateman A."/>
            <person name="Brown S."/>
            <person name="Chandra G."/>
            <person name="Chen C.W."/>
            <person name="Collins M."/>
            <person name="Cronin A."/>
            <person name="Fraser A."/>
            <person name="Goble A."/>
            <person name="Hidalgo J."/>
            <person name="Hornsby T."/>
            <person name="Howarth S."/>
            <person name="Huang C.-H."/>
            <person name="Kieser T."/>
            <person name="Larke L."/>
            <person name="Murphy L.D."/>
            <person name="Oliver K."/>
            <person name="O'Neil S."/>
            <person name="Rabbinowitsch E."/>
            <person name="Rajandream M.A."/>
            <person name="Rutherford K.M."/>
            <person name="Rutter S."/>
            <person name="Seeger K."/>
            <person name="Saunders D."/>
            <person name="Sharp S."/>
            <person name="Squares R."/>
            <person name="Squares S."/>
            <person name="Taylor K."/>
            <person name="Warren T."/>
            <person name="Wietzorrek A."/>
            <person name="Woodward J.R."/>
            <person name="Barrell B.G."/>
            <person name="Parkhill J."/>
            <person name="Hopwood D.A."/>
        </authorList>
    </citation>
    <scope>NUCLEOTIDE SEQUENCE [LARGE SCALE GENOMIC DNA]</scope>
    <source>
        <strain>ATCC BAA-471 / A3(2) / M145</strain>
    </source>
</reference>
<protein>
    <recommendedName>
        <fullName evidence="1">UvrABC system protein C</fullName>
        <shortName evidence="1">Protein UvrC</shortName>
    </recommendedName>
    <alternativeName>
        <fullName evidence="1">Excinuclease ABC subunit C</fullName>
    </alternativeName>
</protein>
<feature type="chain" id="PRO_0000138345" description="UvrABC system protein C">
    <location>
        <begin position="1"/>
        <end position="728"/>
    </location>
</feature>
<feature type="domain" description="GIY-YIG" evidence="1">
    <location>
        <begin position="16"/>
        <end position="95"/>
    </location>
</feature>
<feature type="domain" description="UVR" evidence="1">
    <location>
        <begin position="208"/>
        <end position="243"/>
    </location>
</feature>
<feature type="region of interest" description="Disordered" evidence="2">
    <location>
        <begin position="473"/>
        <end position="535"/>
    </location>
</feature>
<feature type="region of interest" description="Disordered" evidence="2">
    <location>
        <begin position="689"/>
        <end position="728"/>
    </location>
</feature>
<feature type="compositionally biased region" description="Low complexity" evidence="2">
    <location>
        <begin position="487"/>
        <end position="505"/>
    </location>
</feature>
<organism>
    <name type="scientific">Streptomyces coelicolor (strain ATCC BAA-471 / A3(2) / M145)</name>
    <dbReference type="NCBI Taxonomy" id="100226"/>
    <lineage>
        <taxon>Bacteria</taxon>
        <taxon>Bacillati</taxon>
        <taxon>Actinomycetota</taxon>
        <taxon>Actinomycetes</taxon>
        <taxon>Kitasatosporales</taxon>
        <taxon>Streptomycetaceae</taxon>
        <taxon>Streptomyces</taxon>
        <taxon>Streptomyces albidoflavus group</taxon>
    </lineage>
</organism>
<accession>Q9Z512</accession>
<sequence>MADPSSYRPRPGEIPDSPGVYRFRDEHRRVIYVGKAKSLRQRLANYFQDLAHLHPRTRTMVTTAASVEWTVVSTEVEALQLEYSWIKEYDPRFNVKYRDDKSYPYLAVTMNEEFPRVQVMRGQKKKGVRYFGPYGHAWAIRDTVDLLLRVFPVRTCSAGVFKNAARTGRPCLLGYIGKCSAPCVGRITPDDHWDLADEFCDFMAGRTGTYLRRLERQMAEAAEEMEYERAARLRDDIGALKKAMEKSAVVLADATDADLIAVAEDELEAAVQIFHVRGGRVRGQRGWVTDKVEEITTGALVEHALQQLYGEEKGDAVPKEVLVPALPDPVEPVQQWLAERRGSGVSLRIPQRGDKKALMETVQRNAQQALVLHKTKRASDLTTRSRALEEIAEALDLDSAPLRIECYDISHLQGDDVVASMVVFEDGLARKSEYRRFQIKGFEGQDDVRSMHEVITRRFRRYLAEKERTGEWADGEGLVDDARHPNGDAAPNGDAAPNDGAAPDDGAARTDGRGLTDGQELTDGPALKDDDGRPKRFAYPPQLVVVDGGQPQVAAAQRALDELGIDDIAVCGLAKRLEEVWLPREDDPVVLPRTSEGLYLLQRVRDEAHRFAITYQRAKRAKRFRAGPLDDVPGLGETRKQALIKHFGSVKKLRSATIDQICEVPGIGRKTAETVAVALARATPAAPAVNTATGEIMDDDDGAPETTADAPGEPVSAGTPDERRGQER</sequence>